<organism>
    <name type="scientific">Coturnix japonica</name>
    <name type="common">Japanese quail</name>
    <name type="synonym">Coturnix coturnix japonica</name>
    <dbReference type="NCBI Taxonomy" id="93934"/>
    <lineage>
        <taxon>Eukaryota</taxon>
        <taxon>Metazoa</taxon>
        <taxon>Chordata</taxon>
        <taxon>Craniata</taxon>
        <taxon>Vertebrata</taxon>
        <taxon>Euteleostomi</taxon>
        <taxon>Archelosauria</taxon>
        <taxon>Archosauria</taxon>
        <taxon>Dinosauria</taxon>
        <taxon>Saurischia</taxon>
        <taxon>Theropoda</taxon>
        <taxon>Coelurosauria</taxon>
        <taxon>Aves</taxon>
        <taxon>Neognathae</taxon>
        <taxon>Galloanserae</taxon>
        <taxon>Galliformes</taxon>
        <taxon>Phasianidae</taxon>
        <taxon>Perdicinae</taxon>
        <taxon>Coturnix</taxon>
    </lineage>
</organism>
<keyword id="KW-0153">Cholesterol metabolism</keyword>
<keyword id="KW-0903">Direct protein sequencing</keyword>
<keyword id="KW-0345">HDL</keyword>
<keyword id="KW-0443">Lipid metabolism</keyword>
<keyword id="KW-0445">Lipid transport</keyword>
<keyword id="KW-1185">Reference proteome</keyword>
<keyword id="KW-0677">Repeat</keyword>
<keyword id="KW-0964">Secreted</keyword>
<keyword id="KW-0732">Signal</keyword>
<keyword id="KW-0753">Steroid metabolism</keyword>
<keyword id="KW-1207">Sterol metabolism</keyword>
<keyword id="KW-0813">Transport</keyword>
<dbReference type="EMBL" id="D85133">
    <property type="protein sequence ID" value="BAA12729.1"/>
    <property type="molecule type" value="mRNA"/>
</dbReference>
<dbReference type="PIR" id="A56866">
    <property type="entry name" value="A56866"/>
</dbReference>
<dbReference type="PIR" id="JC5456">
    <property type="entry name" value="JC5456"/>
</dbReference>
<dbReference type="RefSeq" id="XP_015739386.1">
    <property type="nucleotide sequence ID" value="XM_015883900.1"/>
</dbReference>
<dbReference type="SMR" id="P32918"/>
<dbReference type="Ensembl" id="ENSCJPT00005018678.1">
    <property type="protein sequence ID" value="ENSCJPP00005012959.1"/>
    <property type="gene ID" value="ENSCJPG00005010969.1"/>
</dbReference>
<dbReference type="GeneID" id="107324159"/>
<dbReference type="KEGG" id="cjo:107324159"/>
<dbReference type="CTD" id="335"/>
<dbReference type="GeneTree" id="ENSGT00950000182929"/>
<dbReference type="OrthoDB" id="8727817at2759"/>
<dbReference type="Proteomes" id="UP000694412">
    <property type="component" value="Chromosome 24"/>
</dbReference>
<dbReference type="GO" id="GO:0042627">
    <property type="term" value="C:chylomicron"/>
    <property type="evidence" value="ECO:0007669"/>
    <property type="project" value="TreeGrafter"/>
</dbReference>
<dbReference type="GO" id="GO:0030139">
    <property type="term" value="C:endocytic vesicle"/>
    <property type="evidence" value="ECO:0007669"/>
    <property type="project" value="Ensembl"/>
</dbReference>
<dbReference type="GO" id="GO:1903561">
    <property type="term" value="C:extracellular vesicle"/>
    <property type="evidence" value="ECO:0007669"/>
    <property type="project" value="TreeGrafter"/>
</dbReference>
<dbReference type="GO" id="GO:0034362">
    <property type="term" value="C:low-density lipoprotein particle"/>
    <property type="evidence" value="ECO:0007669"/>
    <property type="project" value="TreeGrafter"/>
</dbReference>
<dbReference type="GO" id="GO:0034366">
    <property type="term" value="C:spherical high-density lipoprotein particle"/>
    <property type="evidence" value="ECO:0007669"/>
    <property type="project" value="Ensembl"/>
</dbReference>
<dbReference type="GO" id="GO:0034361">
    <property type="term" value="C:very-low-density lipoprotein particle"/>
    <property type="evidence" value="ECO:0007669"/>
    <property type="project" value="Ensembl"/>
</dbReference>
<dbReference type="GO" id="GO:0001540">
    <property type="term" value="F:amyloid-beta binding"/>
    <property type="evidence" value="ECO:0007669"/>
    <property type="project" value="Ensembl"/>
</dbReference>
<dbReference type="GO" id="GO:0034191">
    <property type="term" value="F:apolipoprotein A-I receptor binding"/>
    <property type="evidence" value="ECO:0007669"/>
    <property type="project" value="Ensembl"/>
</dbReference>
<dbReference type="GO" id="GO:0045499">
    <property type="term" value="F:chemorepellent activity"/>
    <property type="evidence" value="ECO:0007669"/>
    <property type="project" value="Ensembl"/>
</dbReference>
<dbReference type="GO" id="GO:0015485">
    <property type="term" value="F:cholesterol binding"/>
    <property type="evidence" value="ECO:0007669"/>
    <property type="project" value="Ensembl"/>
</dbReference>
<dbReference type="GO" id="GO:0120020">
    <property type="term" value="F:cholesterol transfer activity"/>
    <property type="evidence" value="ECO:0007669"/>
    <property type="project" value="Ensembl"/>
</dbReference>
<dbReference type="GO" id="GO:0019899">
    <property type="term" value="F:enzyme binding"/>
    <property type="evidence" value="ECO:0007669"/>
    <property type="project" value="Ensembl"/>
</dbReference>
<dbReference type="GO" id="GO:0031072">
    <property type="term" value="F:heat shock protein binding"/>
    <property type="evidence" value="ECO:0007669"/>
    <property type="project" value="Ensembl"/>
</dbReference>
<dbReference type="GO" id="GO:0008035">
    <property type="term" value="F:high-density lipoprotein particle binding"/>
    <property type="evidence" value="ECO:0007669"/>
    <property type="project" value="Ensembl"/>
</dbReference>
<dbReference type="GO" id="GO:0070653">
    <property type="term" value="F:high-density lipoprotein particle receptor binding"/>
    <property type="evidence" value="ECO:0007669"/>
    <property type="project" value="Ensembl"/>
</dbReference>
<dbReference type="GO" id="GO:0042802">
    <property type="term" value="F:identical protein binding"/>
    <property type="evidence" value="ECO:0007669"/>
    <property type="project" value="Ensembl"/>
</dbReference>
<dbReference type="GO" id="GO:0060228">
    <property type="term" value="F:phosphatidylcholine-sterol O-acyltransferase activator activity"/>
    <property type="evidence" value="ECO:0007669"/>
    <property type="project" value="Ensembl"/>
</dbReference>
<dbReference type="GO" id="GO:0005543">
    <property type="term" value="F:phospholipid binding"/>
    <property type="evidence" value="ECO:0007669"/>
    <property type="project" value="Ensembl"/>
</dbReference>
<dbReference type="GO" id="GO:0030325">
    <property type="term" value="P:adrenal gland development"/>
    <property type="evidence" value="ECO:0007669"/>
    <property type="project" value="Ensembl"/>
</dbReference>
<dbReference type="GO" id="GO:0034205">
    <property type="term" value="P:amyloid-beta formation"/>
    <property type="evidence" value="ECO:0007669"/>
    <property type="project" value="Ensembl"/>
</dbReference>
<dbReference type="GO" id="GO:0043534">
    <property type="term" value="P:blood vessel endothelial cell migration"/>
    <property type="evidence" value="ECO:0007669"/>
    <property type="project" value="Ensembl"/>
</dbReference>
<dbReference type="GO" id="GO:0071402">
    <property type="term" value="P:cellular response to lipoprotein particle stimulus"/>
    <property type="evidence" value="ECO:0007669"/>
    <property type="project" value="Ensembl"/>
</dbReference>
<dbReference type="GO" id="GO:0006695">
    <property type="term" value="P:cholesterol biosynthetic process"/>
    <property type="evidence" value="ECO:0007669"/>
    <property type="project" value="Ensembl"/>
</dbReference>
<dbReference type="GO" id="GO:0033344">
    <property type="term" value="P:cholesterol efflux"/>
    <property type="evidence" value="ECO:0007669"/>
    <property type="project" value="Ensembl"/>
</dbReference>
<dbReference type="GO" id="GO:0042632">
    <property type="term" value="P:cholesterol homeostasis"/>
    <property type="evidence" value="ECO:0007669"/>
    <property type="project" value="Ensembl"/>
</dbReference>
<dbReference type="GO" id="GO:0070508">
    <property type="term" value="P:cholesterol import"/>
    <property type="evidence" value="ECO:0007669"/>
    <property type="project" value="Ensembl"/>
</dbReference>
<dbReference type="GO" id="GO:0001935">
    <property type="term" value="P:endothelial cell proliferation"/>
    <property type="evidence" value="ECO:0007669"/>
    <property type="project" value="Ensembl"/>
</dbReference>
<dbReference type="GO" id="GO:0007186">
    <property type="term" value="P:G protein-coupled receptor signaling pathway"/>
    <property type="evidence" value="ECO:0007669"/>
    <property type="project" value="Ensembl"/>
</dbReference>
<dbReference type="GO" id="GO:0008211">
    <property type="term" value="P:glucocorticoid metabolic process"/>
    <property type="evidence" value="ECO:0007669"/>
    <property type="project" value="Ensembl"/>
</dbReference>
<dbReference type="GO" id="GO:0034380">
    <property type="term" value="P:high-density lipoprotein particle assembly"/>
    <property type="evidence" value="ECO:0007669"/>
    <property type="project" value="Ensembl"/>
</dbReference>
<dbReference type="GO" id="GO:0034375">
    <property type="term" value="P:high-density lipoprotein particle remodeling"/>
    <property type="evidence" value="ECO:0007669"/>
    <property type="project" value="Ensembl"/>
</dbReference>
<dbReference type="GO" id="GO:0007229">
    <property type="term" value="P:integrin-mediated signaling pathway"/>
    <property type="evidence" value="ECO:0007669"/>
    <property type="project" value="Ensembl"/>
</dbReference>
<dbReference type="GO" id="GO:0019915">
    <property type="term" value="P:lipid storage"/>
    <property type="evidence" value="ECO:0007669"/>
    <property type="project" value="Ensembl"/>
</dbReference>
<dbReference type="GO" id="GO:0042158">
    <property type="term" value="P:lipoprotein biosynthetic process"/>
    <property type="evidence" value="ECO:0007669"/>
    <property type="project" value="Ensembl"/>
</dbReference>
<dbReference type="GO" id="GO:0060354">
    <property type="term" value="P:negative regulation of cell adhesion molecule production"/>
    <property type="evidence" value="ECO:0007669"/>
    <property type="project" value="Ensembl"/>
</dbReference>
<dbReference type="GO" id="GO:0002719">
    <property type="term" value="P:negative regulation of cytokine production involved in immune response"/>
    <property type="evidence" value="ECO:0007669"/>
    <property type="project" value="Ensembl"/>
</dbReference>
<dbReference type="GO" id="GO:0034115">
    <property type="term" value="P:negative regulation of heterotypic cell-cell adhesion"/>
    <property type="evidence" value="ECO:0007669"/>
    <property type="project" value="Ensembl"/>
</dbReference>
<dbReference type="GO" id="GO:0050728">
    <property type="term" value="P:negative regulation of inflammatory response"/>
    <property type="evidence" value="ECO:0007669"/>
    <property type="project" value="Ensembl"/>
</dbReference>
<dbReference type="GO" id="GO:0032691">
    <property type="term" value="P:negative regulation of interleukin-1 beta production"/>
    <property type="evidence" value="ECO:0007669"/>
    <property type="project" value="Ensembl"/>
</dbReference>
<dbReference type="GO" id="GO:0010804">
    <property type="term" value="P:negative regulation of tumor necrosis factor-mediated signaling pathway"/>
    <property type="evidence" value="ECO:0007669"/>
    <property type="project" value="Ensembl"/>
</dbReference>
<dbReference type="GO" id="GO:0010903">
    <property type="term" value="P:negative regulation of very-low-density lipoprotein particle remodeling"/>
    <property type="evidence" value="ECO:0007669"/>
    <property type="project" value="Ensembl"/>
</dbReference>
<dbReference type="GO" id="GO:0006656">
    <property type="term" value="P:phosphatidylcholine biosynthetic process"/>
    <property type="evidence" value="ECO:0007669"/>
    <property type="project" value="Ensembl"/>
</dbReference>
<dbReference type="GO" id="GO:0033700">
    <property type="term" value="P:phospholipid efflux"/>
    <property type="evidence" value="ECO:0007669"/>
    <property type="project" value="Ensembl"/>
</dbReference>
<dbReference type="GO" id="GO:0055091">
    <property type="term" value="P:phospholipid homeostasis"/>
    <property type="evidence" value="ECO:0007669"/>
    <property type="project" value="Ensembl"/>
</dbReference>
<dbReference type="GO" id="GO:0010875">
    <property type="term" value="P:positive regulation of cholesterol efflux"/>
    <property type="evidence" value="ECO:0007669"/>
    <property type="project" value="Ensembl"/>
</dbReference>
<dbReference type="GO" id="GO:0090205">
    <property type="term" value="P:positive regulation of cholesterol metabolic process"/>
    <property type="evidence" value="ECO:0007669"/>
    <property type="project" value="Ensembl"/>
</dbReference>
<dbReference type="GO" id="GO:0050766">
    <property type="term" value="P:positive regulation of phagocytosis"/>
    <property type="evidence" value="ECO:0007669"/>
    <property type="project" value="Ensembl"/>
</dbReference>
<dbReference type="GO" id="GO:1902995">
    <property type="term" value="P:positive regulation of phospholipid efflux"/>
    <property type="evidence" value="ECO:0007669"/>
    <property type="project" value="Ensembl"/>
</dbReference>
<dbReference type="GO" id="GO:0035025">
    <property type="term" value="P:positive regulation of Rho protein signal transduction"/>
    <property type="evidence" value="ECO:0007669"/>
    <property type="project" value="Ensembl"/>
</dbReference>
<dbReference type="GO" id="GO:0051496">
    <property type="term" value="P:positive regulation of stress fiber assembly"/>
    <property type="evidence" value="ECO:0007669"/>
    <property type="project" value="Ensembl"/>
</dbReference>
<dbReference type="GO" id="GO:1900026">
    <property type="term" value="P:positive regulation of substrate adhesion-dependent cell spreading"/>
    <property type="evidence" value="ECO:0007669"/>
    <property type="project" value="Ensembl"/>
</dbReference>
<dbReference type="GO" id="GO:0050821">
    <property type="term" value="P:protein stabilization"/>
    <property type="evidence" value="ECO:0007669"/>
    <property type="project" value="Ensembl"/>
</dbReference>
<dbReference type="GO" id="GO:0032489">
    <property type="term" value="P:regulation of Cdc42 protein signal transduction"/>
    <property type="evidence" value="ECO:0007669"/>
    <property type="project" value="Ensembl"/>
</dbReference>
<dbReference type="GO" id="GO:0030300">
    <property type="term" value="P:regulation of intestinal cholesterol absorption"/>
    <property type="evidence" value="ECO:0007669"/>
    <property type="project" value="Ensembl"/>
</dbReference>
<dbReference type="GO" id="GO:0043691">
    <property type="term" value="P:reverse cholesterol transport"/>
    <property type="evidence" value="ECO:0007669"/>
    <property type="project" value="Ensembl"/>
</dbReference>
<dbReference type="GO" id="GO:0070328">
    <property type="term" value="P:triglyceride homeostasis"/>
    <property type="evidence" value="ECO:0007669"/>
    <property type="project" value="Ensembl"/>
</dbReference>
<dbReference type="GO" id="GO:0051180">
    <property type="term" value="P:vitamin transport"/>
    <property type="evidence" value="ECO:0007669"/>
    <property type="project" value="Ensembl"/>
</dbReference>
<dbReference type="FunFam" id="1.20.5.20:FF:000001">
    <property type="entry name" value="apolipoprotein A-I"/>
    <property type="match status" value="1"/>
</dbReference>
<dbReference type="FunFam" id="1.20.120.20:FF:000007">
    <property type="entry name" value="Apolipoprotein A-IV a"/>
    <property type="match status" value="1"/>
</dbReference>
<dbReference type="Gene3D" id="1.20.5.20">
    <property type="match status" value="1"/>
</dbReference>
<dbReference type="Gene3D" id="6.10.140.380">
    <property type="match status" value="1"/>
</dbReference>
<dbReference type="Gene3D" id="1.20.120.20">
    <property type="entry name" value="Apolipoprotein"/>
    <property type="match status" value="1"/>
</dbReference>
<dbReference type="InterPro" id="IPR000074">
    <property type="entry name" value="ApoA_E"/>
</dbReference>
<dbReference type="InterPro" id="IPR050163">
    <property type="entry name" value="Apolipoprotein_A1/A4/E"/>
</dbReference>
<dbReference type="PANTHER" id="PTHR18976">
    <property type="entry name" value="APOLIPOPROTEIN"/>
    <property type="match status" value="1"/>
</dbReference>
<dbReference type="PANTHER" id="PTHR18976:SF11">
    <property type="entry name" value="APOLIPOPROTEIN A-I"/>
    <property type="match status" value="1"/>
</dbReference>
<dbReference type="Pfam" id="PF01442">
    <property type="entry name" value="Apolipoprotein"/>
    <property type="match status" value="1"/>
</dbReference>
<dbReference type="SUPFAM" id="SSF58113">
    <property type="entry name" value="Apolipoprotein A-I"/>
    <property type="match status" value="1"/>
</dbReference>
<proteinExistence type="evidence at protein level"/>
<name>APOA1_COTJA</name>
<sequence>MRGVLVTLAVLFLTGTQARSFWQHDDPQTPLDRIRDMLDVYLETVKASGKDAISQFESSAVGKQLDLKLADNLDTLSAAAAKLREDMTPYYREVREMWLKDTEALRAELTKDLEEVKEKIRPFLDQFSAKWTEEVEQYRQRLAPVAQELKDLTKQKVELMQAKLTPVAEEVRDRLREQVEELRKNLAPYSSELRQKLSQKLEEIRERGIPQASEYQAKVVEQLSNLREKMTPLVQEFKERLTPYAENLKNRLIDLLDEVQKTMA</sequence>
<feature type="signal peptide">
    <location>
        <begin position="1"/>
        <end position="18"/>
    </location>
</feature>
<feature type="chain" id="PRO_0000425342" description="Proapolipoprotein A-I">
    <location>
        <begin position="19"/>
        <end position="264"/>
    </location>
</feature>
<feature type="chain" id="PRO_0000001962" description="Apolipoprotein A-I">
    <location>
        <begin position="25"/>
        <end position="264"/>
    </location>
</feature>
<feature type="repeat" description="1">
    <location>
        <begin position="67"/>
        <end position="88"/>
    </location>
</feature>
<feature type="repeat" description="2">
    <location>
        <begin position="89"/>
        <end position="110"/>
    </location>
</feature>
<feature type="repeat" description="3; half-length">
    <location>
        <begin position="111"/>
        <end position="121"/>
    </location>
</feature>
<feature type="repeat" description="4">
    <location>
        <begin position="122"/>
        <end position="143"/>
    </location>
</feature>
<feature type="repeat" description="5">
    <location>
        <begin position="144"/>
        <end position="165"/>
    </location>
</feature>
<feature type="repeat" description="6">
    <location>
        <begin position="166"/>
        <end position="187"/>
    </location>
</feature>
<feature type="repeat" description="7">
    <location>
        <begin position="188"/>
        <end position="209"/>
    </location>
</feature>
<feature type="repeat" description="8">
    <location>
        <begin position="210"/>
        <end position="231"/>
    </location>
</feature>
<feature type="repeat" description="9; half-length">
    <location>
        <begin position="232"/>
        <end position="242"/>
    </location>
</feature>
<feature type="repeat" description="10">
    <location>
        <begin position="243"/>
        <end position="264"/>
    </location>
</feature>
<feature type="region of interest" description="10 X approximate tandem repeats">
    <location>
        <begin position="67"/>
        <end position="264"/>
    </location>
</feature>
<reference key="1">
    <citation type="journal article" date="1997" name="Biosci. Biotechnol. Biochem.">
        <title>Apolipoprotein A-1 of Japanese quail: cDNA sequence and modulation of tissue expression by cholesterol feeding.</title>
        <authorList>
            <person name="Oku H."/>
            <person name="Toda T."/>
            <person name="Nagata J."/>
            <person name="Ishikawa M."/>
            <person name="Neyazaki K."/>
            <person name="Shinjyo C."/>
            <person name="Chinen I."/>
        </authorList>
    </citation>
    <scope>NUCLEOTIDE SEQUENCE [MRNA]</scope>
    <source>
        <tissue>Liver</tissue>
    </source>
</reference>
<reference key="2">
    <citation type="journal article" date="1993" name="Biochim. Biophys. Acta">
        <title>Lipoprotein and apoprotein profile of Japanese quail.</title>
        <authorList>
            <person name="Oku H."/>
            <person name="Ishikawa M."/>
            <person name="Nagata J."/>
            <person name="Toda T."/>
            <person name="Chinen I."/>
        </authorList>
    </citation>
    <scope>PROTEIN SEQUENCE OF 25-60</scope>
</reference>
<comment type="function">
    <text>Participates in the reverse transport of cholesterol from tissues to the liver for excretion by promoting cholesterol efflux from tissues and by acting as a cofactor for the lecithin cholesterol acyltransferase (LCAT).</text>
</comment>
<comment type="subcellular location">
    <subcellularLocation>
        <location>Secreted</location>
    </subcellularLocation>
</comment>
<comment type="tissue specificity">
    <text>Major protein of VLDL, HDL, LDL and in chylomicrons. Expressed in a number of tissues including liver, small intestine, lung, kidney, heart and muscle with highest expression in liver and small intestine.</text>
</comment>
<comment type="similarity">
    <text evidence="1">Belongs to the apolipoprotein A1/A4/E family.</text>
</comment>
<accession>P32918</accession>
<protein>
    <recommendedName>
        <fullName>Apolipoprotein A-I</fullName>
        <shortName>Apo-AI</shortName>
        <shortName>ApoA-I</shortName>
    </recommendedName>
    <alternativeName>
        <fullName>Apolipoprotein A1</fullName>
    </alternativeName>
    <component>
        <recommendedName>
            <fullName>Proapolipoprotein A-I</fullName>
            <shortName>ProapoA-I</shortName>
        </recommendedName>
    </component>
</protein>
<gene>
    <name type="primary">APOA1</name>
</gene>
<evidence type="ECO:0000305" key="1"/>